<sequence length="403" mass="45211">MVKILNNLIFVLNCGSSSVKFAILNPDNKKKYLSGLVECLFLSKTYMKWKDLTTEHKKCIGSNLSHKDALNFIFNKFFLEKKDIYKNIVGIGHRVVHGGNKIKSSTLIDDNIIQLIQKAISFAPLHNPANLIGIKTAIEKFPIFAKKNVAVFDTSFYQNMPETSFLYAIPYFFYKEHHIRRYGAHGTSHHYVASEVALILNKNFNSLNVITCHLGNGASVSAVCNGICVDTSMGLTPLEGLVMGTRSGDIDPSIIFFMYQKLGMSIDEIHTILTKESGLLGLSGISSDFRYFEKKYYFEKKARLAVDIFCHRLSKYIASYMSLMENNLDAIVFTGGIGENVPLIREITLSKLLLIGFKIDTQRNLGIKNGKHGLITTDKSRPAFVIPTDEELAIAQETIKIIK</sequence>
<organism>
    <name type="scientific">Buchnera aphidicola subsp. Schizaphis graminum (strain Sg)</name>
    <dbReference type="NCBI Taxonomy" id="198804"/>
    <lineage>
        <taxon>Bacteria</taxon>
        <taxon>Pseudomonadati</taxon>
        <taxon>Pseudomonadota</taxon>
        <taxon>Gammaproteobacteria</taxon>
        <taxon>Enterobacterales</taxon>
        <taxon>Erwiniaceae</taxon>
        <taxon>Buchnera</taxon>
    </lineage>
</organism>
<name>ACKA_BUCAP</name>
<accession>Q8K9W6</accession>
<comment type="function">
    <text evidence="1">Catalyzes the formation of acetyl phosphate from acetate and ATP. Can also catalyze the reverse reaction.</text>
</comment>
<comment type="catalytic activity">
    <reaction evidence="1">
        <text>acetate + ATP = acetyl phosphate + ADP</text>
        <dbReference type="Rhea" id="RHEA:11352"/>
        <dbReference type="ChEBI" id="CHEBI:22191"/>
        <dbReference type="ChEBI" id="CHEBI:30089"/>
        <dbReference type="ChEBI" id="CHEBI:30616"/>
        <dbReference type="ChEBI" id="CHEBI:456216"/>
        <dbReference type="EC" id="2.7.2.1"/>
    </reaction>
</comment>
<comment type="cofactor">
    <cofactor evidence="1">
        <name>Mg(2+)</name>
        <dbReference type="ChEBI" id="CHEBI:18420"/>
    </cofactor>
    <cofactor evidence="1">
        <name>Mn(2+)</name>
        <dbReference type="ChEBI" id="CHEBI:29035"/>
    </cofactor>
    <text evidence="1">Mg(2+). Can also accept Mn(2+).</text>
</comment>
<comment type="pathway">
    <text evidence="1">Metabolic intermediate biosynthesis; acetyl-CoA biosynthesis; acetyl-CoA from acetate: step 1/2.</text>
</comment>
<comment type="subunit">
    <text evidence="1">Homodimer.</text>
</comment>
<comment type="subcellular location">
    <subcellularLocation>
        <location evidence="1">Cytoplasm</location>
    </subcellularLocation>
</comment>
<comment type="similarity">
    <text evidence="1">Belongs to the acetokinase family.</text>
</comment>
<protein>
    <recommendedName>
        <fullName evidence="1">Acetate kinase</fullName>
        <ecNumber evidence="1">2.7.2.1</ecNumber>
    </recommendedName>
    <alternativeName>
        <fullName evidence="1">Acetokinase</fullName>
    </alternativeName>
</protein>
<keyword id="KW-0067">ATP-binding</keyword>
<keyword id="KW-0963">Cytoplasm</keyword>
<keyword id="KW-0418">Kinase</keyword>
<keyword id="KW-0460">Magnesium</keyword>
<keyword id="KW-0479">Metal-binding</keyword>
<keyword id="KW-0547">Nucleotide-binding</keyword>
<keyword id="KW-0808">Transferase</keyword>
<evidence type="ECO:0000255" key="1">
    <source>
        <dbReference type="HAMAP-Rule" id="MF_00020"/>
    </source>
</evidence>
<reference key="1">
    <citation type="journal article" date="2002" name="Science">
        <title>50 million years of genomic stasis in endosymbiotic bacteria.</title>
        <authorList>
            <person name="Tamas I."/>
            <person name="Klasson L."/>
            <person name="Canbaeck B."/>
            <person name="Naeslund A.K."/>
            <person name="Eriksson A.-S."/>
            <person name="Wernegreen J.J."/>
            <person name="Sandstroem J.P."/>
            <person name="Moran N.A."/>
            <person name="Andersson S.G.E."/>
        </authorList>
    </citation>
    <scope>NUCLEOTIDE SEQUENCE [LARGE SCALE GENOMIC DNA]</scope>
    <source>
        <strain>Sg</strain>
    </source>
</reference>
<dbReference type="EC" id="2.7.2.1" evidence="1"/>
<dbReference type="EMBL" id="AE013218">
    <property type="protein sequence ID" value="AAM67736.1"/>
    <property type="molecule type" value="Genomic_DNA"/>
</dbReference>
<dbReference type="RefSeq" id="WP_011053703.1">
    <property type="nucleotide sequence ID" value="NC_004061.1"/>
</dbReference>
<dbReference type="SMR" id="Q8K9W6"/>
<dbReference type="STRING" id="198804.BUsg_169"/>
<dbReference type="GeneID" id="93003638"/>
<dbReference type="KEGG" id="bas:BUsg_169"/>
<dbReference type="eggNOG" id="COG0282">
    <property type="taxonomic scope" value="Bacteria"/>
</dbReference>
<dbReference type="HOGENOM" id="CLU_020352_0_1_6"/>
<dbReference type="UniPathway" id="UPA00340">
    <property type="reaction ID" value="UER00458"/>
</dbReference>
<dbReference type="Proteomes" id="UP000000416">
    <property type="component" value="Chromosome"/>
</dbReference>
<dbReference type="GO" id="GO:0005829">
    <property type="term" value="C:cytosol"/>
    <property type="evidence" value="ECO:0007669"/>
    <property type="project" value="TreeGrafter"/>
</dbReference>
<dbReference type="GO" id="GO:0008776">
    <property type="term" value="F:acetate kinase activity"/>
    <property type="evidence" value="ECO:0007669"/>
    <property type="project" value="UniProtKB-UniRule"/>
</dbReference>
<dbReference type="GO" id="GO:0005524">
    <property type="term" value="F:ATP binding"/>
    <property type="evidence" value="ECO:0007669"/>
    <property type="project" value="UniProtKB-KW"/>
</dbReference>
<dbReference type="GO" id="GO:0000287">
    <property type="term" value="F:magnesium ion binding"/>
    <property type="evidence" value="ECO:0007669"/>
    <property type="project" value="UniProtKB-UniRule"/>
</dbReference>
<dbReference type="GO" id="GO:0006083">
    <property type="term" value="P:acetate metabolic process"/>
    <property type="evidence" value="ECO:0007669"/>
    <property type="project" value="TreeGrafter"/>
</dbReference>
<dbReference type="GO" id="GO:0006085">
    <property type="term" value="P:acetyl-CoA biosynthetic process"/>
    <property type="evidence" value="ECO:0007669"/>
    <property type="project" value="UniProtKB-UniRule"/>
</dbReference>
<dbReference type="CDD" id="cd24010">
    <property type="entry name" value="ASKHA_NBD_AcK_PK"/>
    <property type="match status" value="1"/>
</dbReference>
<dbReference type="Gene3D" id="3.30.420.40">
    <property type="match status" value="2"/>
</dbReference>
<dbReference type="HAMAP" id="MF_00020">
    <property type="entry name" value="Acetate_kinase"/>
    <property type="match status" value="1"/>
</dbReference>
<dbReference type="InterPro" id="IPR004372">
    <property type="entry name" value="Ac/propionate_kinase"/>
</dbReference>
<dbReference type="InterPro" id="IPR000890">
    <property type="entry name" value="Aliphatic_acid_kin_short-chain"/>
</dbReference>
<dbReference type="InterPro" id="IPR023865">
    <property type="entry name" value="Aliphatic_acid_kinase_CS"/>
</dbReference>
<dbReference type="InterPro" id="IPR043129">
    <property type="entry name" value="ATPase_NBD"/>
</dbReference>
<dbReference type="NCBIfam" id="TIGR00016">
    <property type="entry name" value="ackA"/>
    <property type="match status" value="1"/>
</dbReference>
<dbReference type="PANTHER" id="PTHR21060">
    <property type="entry name" value="ACETATE KINASE"/>
    <property type="match status" value="1"/>
</dbReference>
<dbReference type="PANTHER" id="PTHR21060:SF21">
    <property type="entry name" value="ACETATE KINASE"/>
    <property type="match status" value="1"/>
</dbReference>
<dbReference type="Pfam" id="PF00871">
    <property type="entry name" value="Acetate_kinase"/>
    <property type="match status" value="1"/>
</dbReference>
<dbReference type="PIRSF" id="PIRSF000722">
    <property type="entry name" value="Acetate_prop_kin"/>
    <property type="match status" value="1"/>
</dbReference>
<dbReference type="PRINTS" id="PR00471">
    <property type="entry name" value="ACETATEKNASE"/>
</dbReference>
<dbReference type="SUPFAM" id="SSF53067">
    <property type="entry name" value="Actin-like ATPase domain"/>
    <property type="match status" value="2"/>
</dbReference>
<dbReference type="PROSITE" id="PS01076">
    <property type="entry name" value="ACETATE_KINASE_2"/>
    <property type="match status" value="1"/>
</dbReference>
<feature type="chain" id="PRO_0000107539" description="Acetate kinase">
    <location>
        <begin position="1"/>
        <end position="403"/>
    </location>
</feature>
<feature type="active site" description="Proton donor/acceptor" evidence="1">
    <location>
        <position position="153"/>
    </location>
</feature>
<feature type="binding site" evidence="1">
    <location>
        <position position="13"/>
    </location>
    <ligand>
        <name>Mg(2+)</name>
        <dbReference type="ChEBI" id="CHEBI:18420"/>
    </ligand>
</feature>
<feature type="binding site" evidence="1">
    <location>
        <position position="20"/>
    </location>
    <ligand>
        <name>ATP</name>
        <dbReference type="ChEBI" id="CHEBI:30616"/>
    </ligand>
</feature>
<feature type="binding site" evidence="1">
    <location>
        <position position="94"/>
    </location>
    <ligand>
        <name>substrate</name>
    </ligand>
</feature>
<feature type="binding site" evidence="1">
    <location>
        <begin position="213"/>
        <end position="217"/>
    </location>
    <ligand>
        <name>ATP</name>
        <dbReference type="ChEBI" id="CHEBI:30616"/>
    </ligand>
</feature>
<feature type="binding site" evidence="1">
    <location>
        <begin position="288"/>
        <end position="290"/>
    </location>
    <ligand>
        <name>ATP</name>
        <dbReference type="ChEBI" id="CHEBI:30616"/>
    </ligand>
</feature>
<feature type="binding site" evidence="1">
    <location>
        <begin position="336"/>
        <end position="340"/>
    </location>
    <ligand>
        <name>ATP</name>
        <dbReference type="ChEBI" id="CHEBI:30616"/>
    </ligand>
</feature>
<feature type="binding site" evidence="1">
    <location>
        <position position="390"/>
    </location>
    <ligand>
        <name>Mg(2+)</name>
        <dbReference type="ChEBI" id="CHEBI:18420"/>
    </ligand>
</feature>
<feature type="site" description="Transition state stabilizer" evidence="1">
    <location>
        <position position="185"/>
    </location>
</feature>
<feature type="site" description="Transition state stabilizer" evidence="1">
    <location>
        <position position="246"/>
    </location>
</feature>
<gene>
    <name evidence="1" type="primary">ackA</name>
    <name type="ordered locus">BUsg_169</name>
</gene>
<proteinExistence type="inferred from homology"/>